<name>CEP1_EHV1B</name>
<organism>
    <name type="scientific">Equine herpesvirus 1 (strain Ab4p)</name>
    <name type="common">EHV-1</name>
    <name type="synonym">Equine abortion virus</name>
    <dbReference type="NCBI Taxonomy" id="31520"/>
    <lineage>
        <taxon>Viruses</taxon>
        <taxon>Duplodnaviria</taxon>
        <taxon>Heunggongvirae</taxon>
        <taxon>Peploviricota</taxon>
        <taxon>Herviviricetes</taxon>
        <taxon>Herpesvirales</taxon>
        <taxon>Orthoherpesviridae</taxon>
        <taxon>Alphaherpesvirinae</taxon>
        <taxon>Varicellovirus</taxon>
        <taxon>Varicellovirus equidalpha1</taxon>
        <taxon>Equid alphaherpesvirus 1</taxon>
    </lineage>
</organism>
<organismHost>
    <name type="scientific">Equus caballus</name>
    <name type="common">Horse</name>
    <dbReference type="NCBI Taxonomy" id="9796"/>
</organismHost>
<reference key="1">
    <citation type="journal article" date="1992" name="Virology">
        <title>The DNA sequence of equine herpesvirus-1.</title>
        <authorList>
            <person name="Telford E.A.R."/>
            <person name="Watson M.S."/>
            <person name="McBride K."/>
            <person name="Davison A.J."/>
        </authorList>
    </citation>
    <scope>NUCLEOTIDE SEQUENCE [LARGE SCALE GENOMIC DNA]</scope>
</reference>
<proteinExistence type="inferred from homology"/>
<sequence length="303" mass="33854">MSATMRAEIDPLAHSATVDEMVEAITKGDDSVTTIVDDLVWHATPRFVTEVREVPGLPPSFTTTSVTDMRVDASSEKLMLTLDGQEGSEISCETYMRSCLDLPAFKGFSLFVVTPLEDRVNVLGVAPVILSHRLVLYRPTDLIDFTLCIIQMYLENCSTKRATSSLFVQIECILRNISKTITPLLKMRRLMYIGATWTLNTLMCVTNHNPFDQARVLPNYMMAKMLLGQKSNTPAILDAIYSAGYRQTLSKRPITPCPSGVLRCNKAHLNAPLCTKVVADTLYSWWTATDEKPVPESIYVLYD</sequence>
<keyword id="KW-1035">Host cytoplasm</keyword>
<keyword id="KW-1040">Host Golgi apparatus</keyword>
<keyword id="KW-1185">Reference proteome</keyword>
<keyword id="KW-0946">Virion</keyword>
<keyword id="KW-0920">Virion tegument</keyword>
<protein>
    <recommendedName>
        <fullName evidence="1">Cytoplasmic envelopment protein 1</fullName>
    </recommendedName>
</protein>
<accession>P28945</accession>
<accession>Q6S6U9</accession>
<evidence type="ECO:0000255" key="1">
    <source>
        <dbReference type="HAMAP-Rule" id="MF_04038"/>
    </source>
</evidence>
<feature type="chain" id="PRO_0000115916" description="Cytoplasmic envelopment protein 1">
    <location>
        <begin position="1"/>
        <end position="303"/>
    </location>
</feature>
<gene>
    <name type="ordered locus">55</name>
</gene>
<dbReference type="EMBL" id="AY665713">
    <property type="protein sequence ID" value="AAT67312.1"/>
    <property type="molecule type" value="Genomic_DNA"/>
</dbReference>
<dbReference type="PIR" id="A36801">
    <property type="entry name" value="WZBEE7"/>
</dbReference>
<dbReference type="SMR" id="P28945"/>
<dbReference type="KEGG" id="vg:2948583"/>
<dbReference type="Proteomes" id="UP000001189">
    <property type="component" value="Segment"/>
</dbReference>
<dbReference type="GO" id="GO:0044177">
    <property type="term" value="C:host cell Golgi apparatus"/>
    <property type="evidence" value="ECO:0007669"/>
    <property type="project" value="UniProtKB-SubCell"/>
</dbReference>
<dbReference type="GO" id="GO:0019033">
    <property type="term" value="C:viral tegument"/>
    <property type="evidence" value="ECO:0007669"/>
    <property type="project" value="UniProtKB-SubCell"/>
</dbReference>
<dbReference type="HAMAP" id="MF_04038">
    <property type="entry name" value="HSV_CEP1"/>
    <property type="match status" value="1"/>
</dbReference>
<dbReference type="InterPro" id="IPR002600">
    <property type="entry name" value="Herpes_UL7"/>
</dbReference>
<dbReference type="Pfam" id="PF01677">
    <property type="entry name" value="Herpes_UL7"/>
    <property type="match status" value="1"/>
</dbReference>
<comment type="function">
    <text evidence="1">Plays a critical role in cytoplasmic virus egress. Participates in the final step of tegumentation and envelope acquisition within the host cytoplasm.</text>
</comment>
<comment type="subcellular location">
    <subcellularLocation>
        <location evidence="1">Virion</location>
    </subcellularLocation>
    <subcellularLocation>
        <location evidence="1">Virion tegument</location>
    </subcellularLocation>
    <subcellularLocation>
        <location evidence="1">Host cytoplasm</location>
    </subcellularLocation>
    <subcellularLocation>
        <location evidence="1">Host Golgi apparatus</location>
    </subcellularLocation>
</comment>
<comment type="similarity">
    <text evidence="1">Belongs to the herpesviridae cytoplasmic envelopment protein 1 family.</text>
</comment>